<reference key="1">
    <citation type="journal article" date="2010" name="Mol. Plant Microbe Interact.">
        <title>Streptomyces scabies 87-22 contains a coronafacic acid-like biosynthetic cluster that contributes to plant-microbe interactions.</title>
        <authorList>
            <person name="Bignell D.R."/>
            <person name="Seipke R.F."/>
            <person name="Huguet-Tapia J.C."/>
            <person name="Chambers A.H."/>
            <person name="Parry R.J."/>
            <person name="Loria R."/>
        </authorList>
    </citation>
    <scope>NUCLEOTIDE SEQUENCE [LARGE SCALE GENOMIC DNA]</scope>
    <source>
        <strain>87.22</strain>
    </source>
</reference>
<organism>
    <name type="scientific">Streptomyces scabiei (strain 87.22)</name>
    <dbReference type="NCBI Taxonomy" id="680198"/>
    <lineage>
        <taxon>Bacteria</taxon>
        <taxon>Bacillati</taxon>
        <taxon>Actinomycetota</taxon>
        <taxon>Actinomycetes</taxon>
        <taxon>Kitasatosporales</taxon>
        <taxon>Streptomycetaceae</taxon>
        <taxon>Streptomyces</taxon>
    </lineage>
</organism>
<evidence type="ECO:0000255" key="1">
    <source>
        <dbReference type="HAMAP-Rule" id="MF_02111"/>
    </source>
</evidence>
<dbReference type="EC" id="6.3.1.19" evidence="1"/>
<dbReference type="EMBL" id="FN554889">
    <property type="protein sequence ID" value="CBG74336.1"/>
    <property type="molecule type" value="Genomic_DNA"/>
</dbReference>
<dbReference type="RefSeq" id="WP_013004876.1">
    <property type="nucleotide sequence ID" value="NC_013929.1"/>
</dbReference>
<dbReference type="SMR" id="C9Z4D4"/>
<dbReference type="STRING" id="680198.SCAB_73511"/>
<dbReference type="MEROPS" id="U72.001"/>
<dbReference type="GeneID" id="79935023"/>
<dbReference type="KEGG" id="scb:SCAB_73511"/>
<dbReference type="eggNOG" id="COG0638">
    <property type="taxonomic scope" value="Bacteria"/>
</dbReference>
<dbReference type="HOGENOM" id="CLU_040524_0_1_11"/>
<dbReference type="UniPathway" id="UPA00997"/>
<dbReference type="UniPathway" id="UPA00998"/>
<dbReference type="Proteomes" id="UP000001444">
    <property type="component" value="Chromosome"/>
</dbReference>
<dbReference type="GO" id="GO:0005524">
    <property type="term" value="F:ATP binding"/>
    <property type="evidence" value="ECO:0007669"/>
    <property type="project" value="UniProtKB-UniRule"/>
</dbReference>
<dbReference type="GO" id="GO:0016879">
    <property type="term" value="F:ligase activity, forming carbon-nitrogen bonds"/>
    <property type="evidence" value="ECO:0007669"/>
    <property type="project" value="InterPro"/>
</dbReference>
<dbReference type="GO" id="GO:0000287">
    <property type="term" value="F:magnesium ion binding"/>
    <property type="evidence" value="ECO:0007669"/>
    <property type="project" value="UniProtKB-UniRule"/>
</dbReference>
<dbReference type="GO" id="GO:0019787">
    <property type="term" value="F:ubiquitin-like protein transferase activity"/>
    <property type="evidence" value="ECO:0007669"/>
    <property type="project" value="UniProtKB-UniRule"/>
</dbReference>
<dbReference type="GO" id="GO:0019941">
    <property type="term" value="P:modification-dependent protein catabolic process"/>
    <property type="evidence" value="ECO:0007669"/>
    <property type="project" value="UniProtKB-UniRule"/>
</dbReference>
<dbReference type="GO" id="GO:0010498">
    <property type="term" value="P:proteasomal protein catabolic process"/>
    <property type="evidence" value="ECO:0007669"/>
    <property type="project" value="UniProtKB-UniRule"/>
</dbReference>
<dbReference type="GO" id="GO:0070490">
    <property type="term" value="P:protein pupylation"/>
    <property type="evidence" value="ECO:0007669"/>
    <property type="project" value="UniProtKB-UniRule"/>
</dbReference>
<dbReference type="HAMAP" id="MF_02111">
    <property type="entry name" value="Pup_ligase"/>
    <property type="match status" value="1"/>
</dbReference>
<dbReference type="InterPro" id="IPR022279">
    <property type="entry name" value="Pup_ligase"/>
</dbReference>
<dbReference type="InterPro" id="IPR004347">
    <property type="entry name" value="Pup_ligase/deamidase"/>
</dbReference>
<dbReference type="NCBIfam" id="TIGR03686">
    <property type="entry name" value="pupylate_PafA"/>
    <property type="match status" value="1"/>
</dbReference>
<dbReference type="PANTHER" id="PTHR42307">
    <property type="entry name" value="PUP DEAMIDASE/DEPUPYLASE"/>
    <property type="match status" value="1"/>
</dbReference>
<dbReference type="PANTHER" id="PTHR42307:SF3">
    <property type="entry name" value="PUP--PROTEIN LIGASE"/>
    <property type="match status" value="1"/>
</dbReference>
<dbReference type="Pfam" id="PF03136">
    <property type="entry name" value="Pup_ligase"/>
    <property type="match status" value="1"/>
</dbReference>
<dbReference type="PIRSF" id="PIRSF018077">
    <property type="entry name" value="UCP018077"/>
    <property type="match status" value="1"/>
</dbReference>
<gene>
    <name evidence="1" type="primary">pafA</name>
    <name type="ordered locus">SCAB_73511</name>
</gene>
<proteinExistence type="inferred from homology"/>
<name>PAFA_STRSW</name>
<accession>C9Z4D4</accession>
<sequence length="453" mass="52168">MDRRIFGLENEYGVTCTFRGQRRLSPDEVARYLFRRVVSWGRSSNVFLRNGARLYLDVGSHPEYATPECDNVTELVTHDKAGERILEGLLVDAERRLHEEGIAGDVYLFKNNTDSAGNSYGCHENYLVARHGEFSRLADILIPFLVTRQLLCGAGKVLQTPRGAVYCVSQRAEHIWEGVSSATTRSRPIINTRDEPHADAERYRRLHVIVGDSNMSETTMLLKVGATDLVLRMIEAGTVMRDLTLENPIRAIREVSHDITGRRKVRLASGREASALEVQREYYEKAVDFVERRGIRTGTVEQVLELWGRTLDAIEAEDLDRIGTEIDWVMKYKLIERYRAKHNMTMSHPRVAQIDLAYHDIHRRRGLYYLLERKGQATRICNDLKIFEGKSVPPQTTRARLRGDFIRRAQEQRRDFTVDWVHLKLNDQAQRTVLCKDPFRSVDDRVEKLIAGM</sequence>
<keyword id="KW-0067">ATP-binding</keyword>
<keyword id="KW-0436">Ligase</keyword>
<keyword id="KW-0460">Magnesium</keyword>
<keyword id="KW-0479">Metal-binding</keyword>
<keyword id="KW-0547">Nucleotide-binding</keyword>
<keyword id="KW-1185">Reference proteome</keyword>
<keyword id="KW-0833">Ubl conjugation pathway</keyword>
<feature type="chain" id="PRO_0000395958" description="Pup--protein ligase">
    <location>
        <begin position="1"/>
        <end position="453"/>
    </location>
</feature>
<feature type="active site" description="Proton acceptor" evidence="1">
    <location>
        <position position="57"/>
    </location>
</feature>
<feature type="binding site" evidence="1">
    <location>
        <position position="9"/>
    </location>
    <ligand>
        <name>Mg(2+)</name>
        <dbReference type="ChEBI" id="CHEBI:18420"/>
    </ligand>
</feature>
<feature type="binding site" evidence="1">
    <location>
        <position position="53"/>
    </location>
    <ligand>
        <name>ATP</name>
        <dbReference type="ChEBI" id="CHEBI:30616"/>
    </ligand>
</feature>
<feature type="binding site" evidence="1">
    <location>
        <position position="55"/>
    </location>
    <ligand>
        <name>Mg(2+)</name>
        <dbReference type="ChEBI" id="CHEBI:18420"/>
    </ligand>
</feature>
<feature type="binding site" evidence="1">
    <location>
        <position position="63"/>
    </location>
    <ligand>
        <name>Mg(2+)</name>
        <dbReference type="ChEBI" id="CHEBI:18420"/>
    </ligand>
</feature>
<feature type="binding site" evidence="1">
    <location>
        <position position="66"/>
    </location>
    <ligand>
        <name>ATP</name>
        <dbReference type="ChEBI" id="CHEBI:30616"/>
    </ligand>
</feature>
<feature type="binding site" evidence="1">
    <location>
        <position position="420"/>
    </location>
    <ligand>
        <name>ATP</name>
        <dbReference type="ChEBI" id="CHEBI:30616"/>
    </ligand>
</feature>
<protein>
    <recommendedName>
        <fullName evidence="1">Pup--protein ligase</fullName>
        <ecNumber evidence="1">6.3.1.19</ecNumber>
    </recommendedName>
    <alternativeName>
        <fullName evidence="1">Proteasome accessory factor A</fullName>
    </alternativeName>
    <alternativeName>
        <fullName evidence="1">Pup-conjugating enzyme</fullName>
    </alternativeName>
</protein>
<comment type="function">
    <text evidence="1">Catalyzes the covalent attachment of the prokaryotic ubiquitin-like protein modifier Pup to the proteasomal substrate proteins, thereby targeting them for proteasomal degradation. This tagging system is termed pupylation. The ligation reaction involves the side-chain carboxylate of the C-terminal glutamate of Pup and the side-chain amino group of a substrate lysine.</text>
</comment>
<comment type="catalytic activity">
    <reaction evidence="1">
        <text>ATP + [prokaryotic ubiquitin-like protein]-L-glutamate + [protein]-L-lysine = ADP + phosphate + N(6)-([prokaryotic ubiquitin-like protein]-gamma-L-glutamyl)-[protein]-L-lysine.</text>
        <dbReference type="EC" id="6.3.1.19"/>
    </reaction>
</comment>
<comment type="pathway">
    <text evidence="1">Protein degradation; proteasomal Pup-dependent pathway.</text>
</comment>
<comment type="pathway">
    <text evidence="1">Protein modification; protein pupylation.</text>
</comment>
<comment type="miscellaneous">
    <text evidence="1">The reaction mechanism probably proceeds via the activation of Pup by phosphorylation of its C-terminal glutamate, which is then subject to nucleophilic attack by the substrate lysine, resulting in an isopeptide bond and the release of phosphate as a good leaving group.</text>
</comment>
<comment type="similarity">
    <text evidence="1">Belongs to the Pup ligase/Pup deamidase family. Pup-conjugating enzyme subfamily.</text>
</comment>